<protein>
    <recommendedName>
        <fullName>Tumor-associated calcium signal transducer 2</fullName>
    </recommendedName>
    <alternativeName>
        <fullName>Parturition-related protein 1</fullName>
    </alternativeName>
</protein>
<sequence length="317" mass="35514">MARGLDLAPLLLLLLAMVAGFCTAQINCTCPTNKMTICNSNGPGGVCQCRAIGSQVLVDCSTLTSKCLLLKARMSARKSSRRLVNPSEHAILDNDGLYDPECDDKGRFKARQCNQTSVCWCVNSVGVRRTDKGDQSLRCDEVVRTHHILIELRHRPTDRAFNHSDLDSELRRLFKERYKLHPSFLAAVHYEEPTIQIELQQNASQKGLRDVDIADAAYYFERDIKGESLFVGRRGLDVQVRGEPLHVERTLIYYLDEKPPQFSMKRLTTGLIAVIAVVAVALVAGVVVLVVTNRRKSGKYKKVELKELGEMRSEPSL</sequence>
<comment type="function">
    <text evidence="1">May function as a growth factor receptor.</text>
</comment>
<comment type="subcellular location">
    <subcellularLocation>
        <location evidence="1">Membrane</location>
        <topology evidence="1">Single-pass type I membrane protein</topology>
    </subcellularLocation>
</comment>
<comment type="similarity">
    <text evidence="4">Belongs to the EPCAM family.</text>
</comment>
<reference key="1">
    <citation type="submission" date="2002-11" db="EMBL/GenBank/DDBJ databases">
        <authorList>
            <person name="Huang Z."/>
            <person name="Myatt L."/>
            <person name="Ma R.Z."/>
        </authorList>
    </citation>
    <scope>NUCLEOTIDE SEQUENCE [MRNA]</scope>
    <source>
        <strain>Sprague-Dawley</strain>
    </source>
</reference>
<reference key="2">
    <citation type="journal article" date="2004" name="Genome Res.">
        <title>The status, quality, and expansion of the NIH full-length cDNA project: the Mammalian Gene Collection (MGC).</title>
        <authorList>
            <consortium name="The MGC Project Team"/>
        </authorList>
    </citation>
    <scope>NUCLEOTIDE SEQUENCE [LARGE SCALE MRNA]</scope>
    <source>
        <tissue>Prostate</tissue>
    </source>
</reference>
<gene>
    <name type="primary">Tacstd2</name>
    <name type="synonym">Prp1</name>
</gene>
<dbReference type="EMBL" id="AY185508">
    <property type="protein sequence ID" value="AAO67351.1"/>
    <property type="molecule type" value="mRNA"/>
</dbReference>
<dbReference type="EMBL" id="BC060519">
    <property type="protein sequence ID" value="AAH60519.1"/>
    <property type="molecule type" value="mRNA"/>
</dbReference>
<dbReference type="RefSeq" id="NP_001009540.2">
    <property type="nucleotide sequence ID" value="NM_001009540.2"/>
</dbReference>
<dbReference type="SMR" id="Q6P9Z6"/>
<dbReference type="FunCoup" id="Q6P9Z6">
    <property type="interactions" value="46"/>
</dbReference>
<dbReference type="STRING" id="10116.ENSRNOP00000010156"/>
<dbReference type="GlyCosmos" id="Q6P9Z6">
    <property type="glycosylation" value="4 sites, No reported glycans"/>
</dbReference>
<dbReference type="GlyGen" id="Q6P9Z6">
    <property type="glycosylation" value="4 sites"/>
</dbReference>
<dbReference type="PhosphoSitePlus" id="Q6P9Z6"/>
<dbReference type="PaxDb" id="10116-ENSRNOP00000010156"/>
<dbReference type="GeneID" id="494343"/>
<dbReference type="KEGG" id="rno:494343"/>
<dbReference type="UCSC" id="RGD:1359498">
    <property type="organism name" value="rat"/>
</dbReference>
<dbReference type="AGR" id="RGD:1359498"/>
<dbReference type="CTD" id="4070"/>
<dbReference type="RGD" id="1359498">
    <property type="gene designation" value="Tacstd2"/>
</dbReference>
<dbReference type="eggNOG" id="ENOG502QVSU">
    <property type="taxonomic scope" value="Eukaryota"/>
</dbReference>
<dbReference type="InParanoid" id="Q6P9Z6"/>
<dbReference type="OrthoDB" id="8953056at2759"/>
<dbReference type="PhylomeDB" id="Q6P9Z6"/>
<dbReference type="TreeFam" id="TF332767"/>
<dbReference type="PRO" id="PR:Q6P9Z6"/>
<dbReference type="Proteomes" id="UP000002494">
    <property type="component" value="Unplaced"/>
</dbReference>
<dbReference type="GO" id="GO:0009925">
    <property type="term" value="C:basal plasma membrane"/>
    <property type="evidence" value="ECO:0000250"/>
    <property type="project" value="UniProtKB"/>
</dbReference>
<dbReference type="GO" id="GO:0005615">
    <property type="term" value="C:extracellular space"/>
    <property type="evidence" value="ECO:0000266"/>
    <property type="project" value="RGD"/>
</dbReference>
<dbReference type="GO" id="GO:0016328">
    <property type="term" value="C:lateral plasma membrane"/>
    <property type="evidence" value="ECO:0000250"/>
    <property type="project" value="UniProtKB"/>
</dbReference>
<dbReference type="GO" id="GO:0016020">
    <property type="term" value="C:membrane"/>
    <property type="evidence" value="ECO:0000266"/>
    <property type="project" value="RGD"/>
</dbReference>
<dbReference type="GO" id="GO:0005634">
    <property type="term" value="C:nucleus"/>
    <property type="evidence" value="ECO:0000266"/>
    <property type="project" value="RGD"/>
</dbReference>
<dbReference type="GO" id="GO:0005886">
    <property type="term" value="C:plasma membrane"/>
    <property type="evidence" value="ECO:0000266"/>
    <property type="project" value="RGD"/>
</dbReference>
<dbReference type="GO" id="GO:0090191">
    <property type="term" value="P:negative regulation of branching involved in ureteric bud morphogenesis"/>
    <property type="evidence" value="ECO:0000250"/>
    <property type="project" value="UniProtKB"/>
</dbReference>
<dbReference type="GO" id="GO:2000146">
    <property type="term" value="P:negative regulation of cell motility"/>
    <property type="evidence" value="ECO:0000250"/>
    <property type="project" value="UniProtKB"/>
</dbReference>
<dbReference type="GO" id="GO:0010633">
    <property type="term" value="P:negative regulation of epithelial cell migration"/>
    <property type="evidence" value="ECO:0000250"/>
    <property type="project" value="UniProtKB"/>
</dbReference>
<dbReference type="GO" id="GO:1900028">
    <property type="term" value="P:negative regulation of ruffle assembly"/>
    <property type="evidence" value="ECO:0000250"/>
    <property type="project" value="UniProtKB"/>
</dbReference>
<dbReference type="GO" id="GO:0051497">
    <property type="term" value="P:negative regulation of stress fiber assembly"/>
    <property type="evidence" value="ECO:0000250"/>
    <property type="project" value="UniProtKB"/>
</dbReference>
<dbReference type="GO" id="GO:1900025">
    <property type="term" value="P:negative regulation of substrate adhesion-dependent cell spreading"/>
    <property type="evidence" value="ECO:0000250"/>
    <property type="project" value="UniProtKB"/>
</dbReference>
<dbReference type="GO" id="GO:2000738">
    <property type="term" value="P:positive regulation of stem cell differentiation"/>
    <property type="evidence" value="ECO:0000266"/>
    <property type="project" value="RGD"/>
</dbReference>
<dbReference type="GO" id="GO:0050678">
    <property type="term" value="P:regulation of epithelial cell proliferation"/>
    <property type="evidence" value="ECO:0000266"/>
    <property type="project" value="RGD"/>
</dbReference>
<dbReference type="GO" id="GO:0060675">
    <property type="term" value="P:ureteric bud morphogenesis"/>
    <property type="evidence" value="ECO:0000266"/>
    <property type="project" value="RGD"/>
</dbReference>
<dbReference type="CDD" id="cd00191">
    <property type="entry name" value="TY"/>
    <property type="match status" value="1"/>
</dbReference>
<dbReference type="FunFam" id="4.10.800.10:FF:000008">
    <property type="entry name" value="tumor-associated calcium signal transducer 2"/>
    <property type="match status" value="1"/>
</dbReference>
<dbReference type="Gene3D" id="4.10.800.10">
    <property type="entry name" value="Thyroglobulin type-1"/>
    <property type="match status" value="1"/>
</dbReference>
<dbReference type="InterPro" id="IPR049420">
    <property type="entry name" value="EPCAM-Trop-2_C"/>
</dbReference>
<dbReference type="InterPro" id="IPR043406">
    <property type="entry name" value="EPCAM/Trop-2"/>
</dbReference>
<dbReference type="InterPro" id="IPR041630">
    <property type="entry name" value="EpCAM_N"/>
</dbReference>
<dbReference type="InterPro" id="IPR000716">
    <property type="entry name" value="Thyroglobulin_1"/>
</dbReference>
<dbReference type="InterPro" id="IPR036857">
    <property type="entry name" value="Thyroglobulin_1_sf"/>
</dbReference>
<dbReference type="PANTHER" id="PTHR14168">
    <property type="entry name" value="TUMOR-ASSOCIATED CALCIUM SIGNAL TRANSDUCER"/>
    <property type="match status" value="1"/>
</dbReference>
<dbReference type="PANTHER" id="PTHR14168:SF5">
    <property type="entry name" value="TUMOR-ASSOCIATED CALCIUM SIGNAL TRANSDUCER 2"/>
    <property type="match status" value="1"/>
</dbReference>
<dbReference type="Pfam" id="PF21283">
    <property type="entry name" value="EPCAM-Trop-2_C"/>
    <property type="match status" value="1"/>
</dbReference>
<dbReference type="Pfam" id="PF18635">
    <property type="entry name" value="EpCAM_N"/>
    <property type="match status" value="1"/>
</dbReference>
<dbReference type="Pfam" id="PF00086">
    <property type="entry name" value="Thyroglobulin_1"/>
    <property type="match status" value="1"/>
</dbReference>
<dbReference type="SMART" id="SM00211">
    <property type="entry name" value="TY"/>
    <property type="match status" value="1"/>
</dbReference>
<dbReference type="SUPFAM" id="SSF57610">
    <property type="entry name" value="Thyroglobulin type-1 domain"/>
    <property type="match status" value="1"/>
</dbReference>
<dbReference type="PROSITE" id="PS00484">
    <property type="entry name" value="THYROGLOBULIN_1_1"/>
    <property type="match status" value="1"/>
</dbReference>
<dbReference type="PROSITE" id="PS51162">
    <property type="entry name" value="THYROGLOBULIN_1_2"/>
    <property type="match status" value="1"/>
</dbReference>
<feature type="signal peptide" evidence="2">
    <location>
        <begin position="1"/>
        <end position="24"/>
    </location>
</feature>
<feature type="chain" id="PRO_0000380188" description="Tumor-associated calcium signal transducer 2">
    <location>
        <begin position="25"/>
        <end position="317"/>
    </location>
</feature>
<feature type="topological domain" description="Extracellular" evidence="2">
    <location>
        <begin position="25"/>
        <end position="270"/>
    </location>
</feature>
<feature type="transmembrane region" description="Helical" evidence="2">
    <location>
        <begin position="271"/>
        <end position="291"/>
    </location>
</feature>
<feature type="topological domain" description="Cytoplasmic" evidence="2">
    <location>
        <begin position="292"/>
        <end position="317"/>
    </location>
</feature>
<feature type="domain" description="Thyroglobulin type-1" evidence="3">
    <location>
        <begin position="64"/>
        <end position="139"/>
    </location>
</feature>
<feature type="glycosylation site" description="N-linked (GlcNAc...) asparagine" evidence="2">
    <location>
        <position position="27"/>
    </location>
</feature>
<feature type="glycosylation site" description="N-linked (GlcNAc...) asparagine" evidence="2">
    <location>
        <position position="114"/>
    </location>
</feature>
<feature type="glycosylation site" description="N-linked (GlcNAc...) asparagine" evidence="2">
    <location>
        <position position="162"/>
    </location>
</feature>
<feature type="glycosylation site" description="N-linked (GlcNAc...) asparagine" evidence="2">
    <location>
        <position position="202"/>
    </location>
</feature>
<feature type="disulfide bond" evidence="3">
    <location>
        <begin position="67"/>
        <end position="102"/>
    </location>
</feature>
<feature type="disulfide bond" evidence="3">
    <location>
        <begin position="113"/>
        <end position="119"/>
    </location>
</feature>
<feature type="disulfide bond" evidence="3">
    <location>
        <begin position="121"/>
        <end position="139"/>
    </location>
</feature>
<feature type="sequence conflict" description="In Ref. 1; AAO67351." evidence="4" ref="1">
    <original>I</original>
    <variation>V</variation>
    <location>
        <position position="37"/>
    </location>
</feature>
<accession>Q6P9Z6</accession>
<accession>Q6K0P4</accession>
<keyword id="KW-1015">Disulfide bond</keyword>
<keyword id="KW-0325">Glycoprotein</keyword>
<keyword id="KW-0472">Membrane</keyword>
<keyword id="KW-1185">Reference proteome</keyword>
<keyword id="KW-0732">Signal</keyword>
<keyword id="KW-0812">Transmembrane</keyword>
<keyword id="KW-1133">Transmembrane helix</keyword>
<organism>
    <name type="scientific">Rattus norvegicus</name>
    <name type="common">Rat</name>
    <dbReference type="NCBI Taxonomy" id="10116"/>
    <lineage>
        <taxon>Eukaryota</taxon>
        <taxon>Metazoa</taxon>
        <taxon>Chordata</taxon>
        <taxon>Craniata</taxon>
        <taxon>Vertebrata</taxon>
        <taxon>Euteleostomi</taxon>
        <taxon>Mammalia</taxon>
        <taxon>Eutheria</taxon>
        <taxon>Euarchontoglires</taxon>
        <taxon>Glires</taxon>
        <taxon>Rodentia</taxon>
        <taxon>Myomorpha</taxon>
        <taxon>Muroidea</taxon>
        <taxon>Muridae</taxon>
        <taxon>Murinae</taxon>
        <taxon>Rattus</taxon>
    </lineage>
</organism>
<evidence type="ECO:0000250" key="1"/>
<evidence type="ECO:0000255" key="2"/>
<evidence type="ECO:0000255" key="3">
    <source>
        <dbReference type="PROSITE-ProRule" id="PRU00500"/>
    </source>
</evidence>
<evidence type="ECO:0000305" key="4"/>
<proteinExistence type="evidence at transcript level"/>
<name>TACD2_RAT</name>